<reference key="1">
    <citation type="journal article" date="1994" name="FEBS Lett.">
        <title>Structural determination and characterization of a 40 kDa protein isolated from rat 40 S ribosomal subunit.</title>
        <authorList>
            <person name="Tohgo A."/>
            <person name="Takasawa S."/>
            <person name="Munakata H."/>
            <person name="Yonekura H."/>
            <person name="Hayashi N."/>
            <person name="Okamoto H."/>
        </authorList>
    </citation>
    <scope>NUCLEOTIDE SEQUENCE [MRNA]</scope>
    <scope>PARTIAL PROTEIN SEQUENCE</scope>
    <source>
        <strain>Wistar</strain>
        <tissue>Liver</tissue>
    </source>
</reference>
<reference key="2">
    <citation type="submission" date="2008-10" db="EMBL/GenBank/DDBJ databases">
        <title>Cloning and analysis of laminin receptor gene in SD rat.</title>
        <authorList>
            <person name="Ning Z."/>
            <person name="Luo M."/>
        </authorList>
    </citation>
    <scope>NUCLEOTIDE SEQUENCE [MRNA]</scope>
    <source>
        <strain>Sprague-Dawley</strain>
    </source>
</reference>
<reference key="3">
    <citation type="journal article" date="2004" name="Genome Res.">
        <title>The status, quality, and expansion of the NIH full-length cDNA project: the Mammalian Gene Collection (MGC).</title>
        <authorList>
            <consortium name="The MGC Project Team"/>
        </authorList>
    </citation>
    <scope>NUCLEOTIDE SEQUENCE [LARGE SCALE MRNA]</scope>
    <source>
        <tissue>Pituitary</tissue>
    </source>
</reference>
<reference key="4">
    <citation type="journal article" date="2004" name="Eur. J. Neurosci.">
        <title>Cellular prion protein/laminin receptor: distribution in adult central nervous system and characterization of an isoform associated with a subtype of cortical neurons.</title>
        <authorList>
            <person name="Baloui H."/>
            <person name="von Boxberg Y."/>
            <person name="Vinh J."/>
            <person name="Weiss S."/>
            <person name="Rossier J."/>
            <person name="Nothias F."/>
            <person name="Stettler O."/>
        </authorList>
    </citation>
    <scope>PROTEIN SEQUENCE OF 2-11; 43-52; 90-102 AND 156-166</scope>
    <scope>CLEAVAGE OF INITIATOR METHIONINE</scope>
    <scope>ACETYLATION AT SER-2</scope>
    <scope>SUBCELLULAR LOCATION</scope>
    <scope>TISSUE SPECIFICITY</scope>
    <scope>IDENTIFICATION BY MASS SPECTROMETRY</scope>
</reference>
<reference key="5">
    <citation type="submission" date="2009-06" db="UniProtKB">
        <authorList>
            <person name="Bienvenut W.V."/>
            <person name="von Kriegsheim A."/>
            <person name="Kolch W."/>
        </authorList>
    </citation>
    <scope>PROTEIN SEQUENCE OF 2-17; 64-80; 90-102; 121-128 AND 156-166</scope>
    <scope>CLEAVAGE OF INITIATOR METHIONINE</scope>
    <scope>ACETYLATION AT SER-2</scope>
    <scope>IDENTIFICATION BY MASS SPECTROMETRY</scope>
    <source>
        <tissue>Fibroblast</tissue>
    </source>
</reference>
<reference key="6">
    <citation type="journal article" date="1994" name="Gastroenterology">
        <title>Laminin receptor expression in rat intestine and liver during development and differentiation.</title>
        <authorList>
            <person name="Rao M."/>
            <person name="Manishen W.J."/>
            <person name="Maheshwari Y."/>
            <person name="Sykes D.E."/>
            <person name="Siyanova E.Y."/>
            <person name="Tyner A.L."/>
            <person name="Weiser M.M."/>
        </authorList>
    </citation>
    <scope>NUCLEOTIDE SEQUENCE [MRNA] OF 199-295</scope>
    <source>
        <strain>Holtzman</strain>
        <tissue>Intestinal epithelium</tissue>
    </source>
</reference>
<reference key="7">
    <citation type="submission" date="1989-09" db="EMBL/GenBank/DDBJ databases">
        <authorList>
            <person name="Burns F.R."/>
            <person name="Rajnavolgy E."/>
            <person name="Yamashita K."/>
            <person name="Li X."/>
            <person name="Shen N."/>
            <person name="Heber-Katz E."/>
        </authorList>
    </citation>
    <scope>NUCLEOTIDE SEQUENCE [MRNA] OF 226-295</scope>
</reference>
<reference key="8">
    <citation type="journal article" date="1977" name="J. Biol. Chem.">
        <title>Isolation of eukaryotic ribosomal proteins. Purification and characterization of the 40 S ribosomal subunit proteins Sa, Sc, S3a, S3b, S5', S9, S10, S11, S12, S14, S15, S15', S16, S17, S18, S19, S20, S21, S26, S27', and S29.</title>
        <authorList>
            <person name="Collatz E."/>
            <person name="Ulbrich N."/>
            <person name="Tsurugi K."/>
            <person name="Lightfoot H.N."/>
            <person name="MacKinlay W."/>
            <person name="Lin A."/>
            <person name="Wool I.G."/>
        </authorList>
    </citation>
    <scope>IDENTIFICATION IN SMALL RIBOSOMAL SUBUNIT</scope>
</reference>
<reference key="9">
    <citation type="journal article" date="1983" name="EMBO J.">
        <title>Isolation of a laminin-binding protein from muscle cell membranes.</title>
        <authorList>
            <person name="Lesot H."/>
            <person name="Kuehl U."/>
            <person name="von der Mark K."/>
        </authorList>
    </citation>
    <scope>FUNCTION</scope>
</reference>
<reference key="10">
    <citation type="journal article" date="1996" name="J. Biol. Chem.">
        <title>Mass spectrometric analysis of 40 S ribosomal proteins from Rat-1 fibroblasts.</title>
        <authorList>
            <person name="Louie D.F."/>
            <person name="Resing K.A."/>
            <person name="Lewis T.S."/>
            <person name="Ahn N.G."/>
        </authorList>
    </citation>
    <scope>MASS SPECTROMETRY</scope>
</reference>
<accession>P38983</accession>
<accession>B6ZB78</accession>
<name>RSSA_RAT</name>
<gene>
    <name type="primary">Rpsa</name>
    <name type="synonym">Lamr1</name>
</gene>
<feature type="initiator methionine" description="Removed" evidence="3 5 8">
    <location>
        <position position="1"/>
    </location>
</feature>
<feature type="chain" id="PRO_0000134360" description="Small ribosomal subunit protein uS2">
    <location>
        <begin position="2"/>
        <end position="295"/>
    </location>
</feature>
<feature type="repeat" description="[DE]-W-[ST] 1">
    <location>
        <begin position="230"/>
        <end position="232"/>
    </location>
</feature>
<feature type="repeat" description="[DE]-W-[ST] 2">
    <location>
        <begin position="247"/>
        <end position="249"/>
    </location>
</feature>
<feature type="repeat" description="[DE]-W-[ST] 3">
    <location>
        <begin position="266"/>
        <end position="268"/>
    </location>
</feature>
<feature type="repeat" description="[DE]-W-[ST] 4">
    <location>
        <begin position="275"/>
        <end position="277"/>
    </location>
</feature>
<feature type="repeat" description="[DE]-W-[ST] 5">
    <location>
        <begin position="293"/>
        <end position="295"/>
    </location>
</feature>
<feature type="region of interest" description="Interaction with PPP1R16B" evidence="3">
    <location>
        <begin position="54"/>
        <end position="113"/>
    </location>
</feature>
<feature type="region of interest" description="Laminin-binding" evidence="3">
    <location>
        <begin position="161"/>
        <end position="180"/>
    </location>
</feature>
<feature type="region of interest" description="Laminin-binding" evidence="3">
    <location>
        <begin position="205"/>
        <end position="229"/>
    </location>
</feature>
<feature type="region of interest" description="Laminin-binding" evidence="3">
    <location>
        <begin position="242"/>
        <end position="295"/>
    </location>
</feature>
<feature type="region of interest" description="Disordered" evidence="4">
    <location>
        <begin position="266"/>
        <end position="295"/>
    </location>
</feature>
<feature type="site" description="Cleavage; by ST3; site 1" evidence="3">
    <location>
        <begin position="115"/>
        <end position="116"/>
    </location>
</feature>
<feature type="site" description="Cleavage; by ST3; site 2" evidence="3">
    <location>
        <begin position="133"/>
        <end position="134"/>
    </location>
</feature>
<feature type="modified residue" description="N-acetylserine" evidence="3 5 8">
    <location>
        <position position="2"/>
    </location>
</feature>
<feature type="modified residue" description="Phosphoserine" evidence="1">
    <location>
        <position position="43"/>
    </location>
</feature>
<feature type="modified residue" description="N6-acetyllysine" evidence="1">
    <location>
        <position position="52"/>
    </location>
</feature>
<feature type="modified residue" description="N6-acetyllysine; alternate" evidence="2">
    <location>
        <position position="89"/>
    </location>
</feature>
<feature type="modified residue" description="Phosphothreonine" evidence="1">
    <location>
        <position position="97"/>
    </location>
</feature>
<feature type="cross-link" description="Glycyl lysine isopeptide (Lys-Gly) (interchain with G-Cter in SUMO2); alternate" evidence="1">
    <location>
        <position position="89"/>
    </location>
</feature>
<feature type="sequence conflict" description="In Ref. 2; ACJ13448." evidence="9" ref="2">
    <original>M</original>
    <variation>V</variation>
    <location>
        <position position="177"/>
    </location>
</feature>
<feature type="sequence conflict" description="In Ref. 2; ACJ13448." evidence="9" ref="2">
    <original>E</original>
    <variation>G</variation>
    <location>
        <position position="244"/>
    </location>
</feature>
<protein>
    <recommendedName>
        <fullName evidence="3">Small ribosomal subunit protein uS2</fullName>
    </recommendedName>
    <alternativeName>
        <fullName evidence="3">37 kDa laminin receptor precursor</fullName>
        <shortName evidence="3">37LRP</shortName>
    </alternativeName>
    <alternativeName>
        <fullName evidence="3">37/67 kDa laminin receptor</fullName>
        <shortName evidence="3">LRP/LR</shortName>
    </alternativeName>
    <alternativeName>
        <fullName evidence="9">40S ribosomal protein SA</fullName>
    </alternativeName>
    <alternativeName>
        <fullName evidence="3">67 kDa laminin receptor</fullName>
        <shortName evidence="3">67LR</shortName>
    </alternativeName>
    <alternativeName>
        <fullName evidence="3">Laminin receptor 1</fullName>
        <shortName evidence="3">LamR</shortName>
    </alternativeName>
    <alternativeName>
        <fullName evidence="3">Laminin-binding protein precursor p40</fullName>
        <shortName evidence="3">LBP/p40</shortName>
    </alternativeName>
</protein>
<sequence length="295" mass="32824">MSGGLDVLQMKEEDVLKFLAAGTHLGGTNLDFQMEQYIYKRKSDGIYIINLKRTWEKLLLAARAIVAIENPADVSVISSRNTGQRAVLKFAAATGATPIAGRFTPGTFTNQIQAAFREPRLLVVTDPRADHQPLTEASYVNLPTIALCNTDSPLRYVDIAIPCNNKGAHSVGLMWWMLAREVLRMRGTISREHPWEVMPDLYFYRDPEEIEKEEQAAAEKAVTKEEFQGEWTAPAPEFTAAQPEVADWSEGVQVPSVPIQQFPTEDWSAQPATEDWSAAPTAQATEWVGATTEWS</sequence>
<comment type="function">
    <text evidence="3 6">Required for the assembly and/or stability of the 40S ribosomal subunit. Required for the processing of the 20S rRNA-precursor to mature 18S rRNA in a late step of the maturation of 40S ribosomal subunits. Also functions as a cell surface receptor for laminin. Plays a role in cell adhesion to the basement membrane and in the consequent activation of signaling transduction pathways. May play a role in cell fate determination and tissue morphogenesis. Also acts as a receptor for several other ligands, including the pathogenic prion protein, viruses, and bacteria. Acts as a PPP1R16B-dependent substrate of PPP1CA.</text>
</comment>
<comment type="subunit">
    <text evidence="3">Monomer (37LRP) and homodimer (67LR). Component of the small ribosomal subunit. Mature ribosomes consist of a small (40S) and a large (60S) subunit. The 40S subunit contains about 33 different proteins and 1 molecule of RNA (18S). The 60S subunit contains about 49 different proteins and 3 molecules of RNA (28S, 5.8S and 5S). Interacts with RPS21. Interacts with several laminins including at least LAMB1. Interacts with MDK. The mature dimeric form interacts with PPP1R16B (via its fourth ankyrin repeat). Interacts with PPP1CA only in the presence of PPP1R16B.</text>
</comment>
<comment type="subcellular location">
    <subcellularLocation>
        <location evidence="3 5">Cell membrane</location>
    </subcellularLocation>
    <subcellularLocation>
        <location evidence="3 5">Cytoplasm</location>
    </subcellularLocation>
    <subcellularLocation>
        <location evidence="3">Nucleus</location>
    </subcellularLocation>
    <text evidence="3">67LR is found at the surface of the plasma membrane, with its C-terminal laminin-binding domain accessible to extracellular ligands. 37LRP is found at the cell surface, in the cytoplasm and in the nucleus. Colocalizes with PPP1R16B in the cell membrane (By similarity).</text>
</comment>
<comment type="tissue specificity">
    <text evidence="5">Expressed in most neurons and in a subset of glial cells. The overall distribution of LR correlates with that reported for laminin-1 but also with brain regions classically associated with prion-related neurodegeneration.</text>
</comment>
<comment type="PTM">
    <text evidence="3">Acylated. Acylation may be a prerequisite for conversion of the monomeric 37 kDa laminin receptor precursor (37LRP) to the mature dimeric 67 kDa laminin receptor (67LR), and may provide a mechanism for membrane association.</text>
</comment>
<comment type="PTM">
    <text evidence="3">Cleaved by stromelysin-3 (ST3) at the cell surface. Cleavage by stromelysin-3 may be a mechanism to alter cell-extracellular matrix interactions.</text>
</comment>
<comment type="mass spectrometry" mass="32734.1" error="1.3" method="Electrospray" evidence="7"/>
<comment type="miscellaneous">
    <text>This protein appears to have acquired a second function as a laminin receptor specifically in the vertebrate lineage.</text>
</comment>
<comment type="miscellaneous">
    <text>It is thought that in vertebrates 37/67 kDa laminin receptor acquired a dual function during evolution. It developed from the ribosomal protein SA, playing an essential role in the protein biosynthesis lacking any laminin binding activity, to a cell surface receptor with laminin binding activity.</text>
</comment>
<comment type="similarity">
    <text evidence="3">Belongs to the universal ribosomal protein uS2 family.</text>
</comment>
<keyword id="KW-0002">3D-structure</keyword>
<keyword id="KW-0007">Acetylation</keyword>
<keyword id="KW-1003">Cell membrane</keyword>
<keyword id="KW-0963">Cytoplasm</keyword>
<keyword id="KW-0903">Direct protein sequencing</keyword>
<keyword id="KW-1017">Isopeptide bond</keyword>
<keyword id="KW-0472">Membrane</keyword>
<keyword id="KW-0539">Nucleus</keyword>
<keyword id="KW-0597">Phosphoprotein</keyword>
<keyword id="KW-0675">Receptor</keyword>
<keyword id="KW-1185">Reference proteome</keyword>
<keyword id="KW-0677">Repeat</keyword>
<keyword id="KW-0687">Ribonucleoprotein</keyword>
<keyword id="KW-0689">Ribosomal protein</keyword>
<keyword id="KW-0832">Ubl conjugation</keyword>
<evidence type="ECO:0000250" key="1">
    <source>
        <dbReference type="UniProtKB" id="P08865"/>
    </source>
</evidence>
<evidence type="ECO:0000250" key="2">
    <source>
        <dbReference type="UniProtKB" id="P14206"/>
    </source>
</evidence>
<evidence type="ECO:0000255" key="3">
    <source>
        <dbReference type="HAMAP-Rule" id="MF_03016"/>
    </source>
</evidence>
<evidence type="ECO:0000256" key="4">
    <source>
        <dbReference type="SAM" id="MobiDB-lite"/>
    </source>
</evidence>
<evidence type="ECO:0000269" key="5">
    <source>
    </source>
</evidence>
<evidence type="ECO:0000269" key="6">
    <source>
    </source>
</evidence>
<evidence type="ECO:0000269" key="7">
    <source>
    </source>
</evidence>
<evidence type="ECO:0000269" key="8">
    <source ref="5"/>
</evidence>
<evidence type="ECO:0000305" key="9"/>
<proteinExistence type="evidence at protein level"/>
<dbReference type="EMBL" id="D25224">
    <property type="protein sequence ID" value="BAA04953.1"/>
    <property type="molecule type" value="mRNA"/>
</dbReference>
<dbReference type="EMBL" id="FJ386454">
    <property type="protein sequence ID" value="ACJ13448.1"/>
    <property type="molecule type" value="mRNA"/>
</dbReference>
<dbReference type="EMBL" id="BC060578">
    <property type="protein sequence ID" value="AAH60578.1"/>
    <property type="molecule type" value="mRNA"/>
</dbReference>
<dbReference type="EMBL" id="U04942">
    <property type="protein sequence ID" value="AAB60453.1"/>
    <property type="molecule type" value="mRNA"/>
</dbReference>
<dbReference type="EMBL" id="M27798">
    <property type="protein sequence ID" value="AAA41509.1"/>
    <property type="molecule type" value="mRNA"/>
</dbReference>
<dbReference type="PIR" id="S42405">
    <property type="entry name" value="S42405"/>
</dbReference>
<dbReference type="RefSeq" id="NP_058834.1">
    <property type="nucleotide sequence ID" value="NM_017138.2"/>
</dbReference>
<dbReference type="PDB" id="7QGG">
    <property type="method" value="EM"/>
    <property type="resolution" value="2.86 A"/>
    <property type="chains" value="SA=1-295"/>
</dbReference>
<dbReference type="PDBsum" id="7QGG"/>
<dbReference type="EMDB" id="EMD-13954"/>
<dbReference type="SMR" id="P38983"/>
<dbReference type="BioGRID" id="247913">
    <property type="interactions" value="7"/>
</dbReference>
<dbReference type="FunCoup" id="P38983">
    <property type="interactions" value="2539"/>
</dbReference>
<dbReference type="IntAct" id="P38983">
    <property type="interactions" value="4"/>
</dbReference>
<dbReference type="MINT" id="P38983"/>
<dbReference type="STRING" id="10116.ENSRNOP00000025224"/>
<dbReference type="GlyGen" id="P38983">
    <property type="glycosylation" value="1 site, 1 O-linked glycan (1 site)"/>
</dbReference>
<dbReference type="iPTMnet" id="P38983"/>
<dbReference type="PhosphoSitePlus" id="P38983"/>
<dbReference type="jPOST" id="P38983"/>
<dbReference type="PaxDb" id="10116-ENSRNOP00000025224"/>
<dbReference type="DNASU" id="29236"/>
<dbReference type="GeneID" id="29236"/>
<dbReference type="KEGG" id="rno:29236"/>
<dbReference type="UCSC" id="RGD:71026">
    <property type="organism name" value="rat"/>
</dbReference>
<dbReference type="AGR" id="RGD:71026"/>
<dbReference type="CTD" id="3921"/>
<dbReference type="RGD" id="71026">
    <property type="gene designation" value="Rpsa"/>
</dbReference>
<dbReference type="VEuPathDB" id="HostDB:ENSRNOG00000018645"/>
<dbReference type="eggNOG" id="KOG0830">
    <property type="taxonomic scope" value="Eukaryota"/>
</dbReference>
<dbReference type="HOGENOM" id="CLU_058171_1_0_1"/>
<dbReference type="InParanoid" id="P38983"/>
<dbReference type="OrthoDB" id="50764at9989"/>
<dbReference type="PhylomeDB" id="P38983"/>
<dbReference type="TreeFam" id="TF300100"/>
<dbReference type="Reactome" id="R-RNO-156827">
    <property type="pathway name" value="L13a-mediated translational silencing of Ceruloplasmin expression"/>
</dbReference>
<dbReference type="Reactome" id="R-RNO-1799339">
    <property type="pathway name" value="SRP-dependent cotranslational protein targeting to membrane"/>
</dbReference>
<dbReference type="Reactome" id="R-RNO-6791226">
    <property type="pathway name" value="Major pathway of rRNA processing in the nucleolus and cytosol"/>
</dbReference>
<dbReference type="Reactome" id="R-RNO-72649">
    <property type="pathway name" value="Translation initiation complex formation"/>
</dbReference>
<dbReference type="Reactome" id="R-RNO-72689">
    <property type="pathway name" value="Formation of a pool of free 40S subunits"/>
</dbReference>
<dbReference type="Reactome" id="R-RNO-72695">
    <property type="pathway name" value="Formation of the ternary complex, and subsequently, the 43S complex"/>
</dbReference>
<dbReference type="Reactome" id="R-RNO-72702">
    <property type="pathway name" value="Ribosomal scanning and start codon recognition"/>
</dbReference>
<dbReference type="Reactome" id="R-RNO-72706">
    <property type="pathway name" value="GTP hydrolysis and joining of the 60S ribosomal subunit"/>
</dbReference>
<dbReference type="Reactome" id="R-RNO-975956">
    <property type="pathway name" value="Nonsense Mediated Decay (NMD) independent of the Exon Junction Complex (EJC)"/>
</dbReference>
<dbReference type="Reactome" id="R-RNO-975957">
    <property type="pathway name" value="Nonsense Mediated Decay (NMD) enhanced by the Exon Junction Complex (EJC)"/>
</dbReference>
<dbReference type="PRO" id="PR:P38983"/>
<dbReference type="Proteomes" id="UP000002494">
    <property type="component" value="Chromosome 8"/>
</dbReference>
<dbReference type="Bgee" id="ENSRNOG00000018645">
    <property type="expression patterns" value="Expressed in spleen and 19 other cell types or tissues"/>
</dbReference>
<dbReference type="GO" id="GO:0005604">
    <property type="term" value="C:basement membrane"/>
    <property type="evidence" value="ECO:0000314"/>
    <property type="project" value="RGD"/>
</dbReference>
<dbReference type="GO" id="GO:0005737">
    <property type="term" value="C:cytoplasm"/>
    <property type="evidence" value="ECO:0000266"/>
    <property type="project" value="RGD"/>
</dbReference>
<dbReference type="GO" id="GO:0098556">
    <property type="term" value="C:cytoplasmic side of rough endoplasmic reticulum membrane"/>
    <property type="evidence" value="ECO:0000266"/>
    <property type="project" value="RGD"/>
</dbReference>
<dbReference type="GO" id="GO:0022626">
    <property type="term" value="C:cytosolic ribosome"/>
    <property type="evidence" value="ECO:0000266"/>
    <property type="project" value="RGD"/>
</dbReference>
<dbReference type="GO" id="GO:0022627">
    <property type="term" value="C:cytosolic small ribosomal subunit"/>
    <property type="evidence" value="ECO:0000314"/>
    <property type="project" value="RGD"/>
</dbReference>
<dbReference type="GO" id="GO:0098978">
    <property type="term" value="C:glutamatergic synapse"/>
    <property type="evidence" value="ECO:0000266"/>
    <property type="project" value="RGD"/>
</dbReference>
<dbReference type="GO" id="GO:0043025">
    <property type="term" value="C:neuronal cell body"/>
    <property type="evidence" value="ECO:0000314"/>
    <property type="project" value="RGD"/>
</dbReference>
<dbReference type="GO" id="GO:0005634">
    <property type="term" value="C:nucleus"/>
    <property type="evidence" value="ECO:0000266"/>
    <property type="project" value="RGD"/>
</dbReference>
<dbReference type="GO" id="GO:0005886">
    <property type="term" value="C:plasma membrane"/>
    <property type="evidence" value="ECO:0000250"/>
    <property type="project" value="UniProtKB"/>
</dbReference>
<dbReference type="GO" id="GO:0015935">
    <property type="term" value="C:small ribosomal subunit"/>
    <property type="evidence" value="ECO:0000266"/>
    <property type="project" value="RGD"/>
</dbReference>
<dbReference type="GO" id="GO:0045202">
    <property type="term" value="C:synapse"/>
    <property type="evidence" value="ECO:0000266"/>
    <property type="project" value="RGD"/>
</dbReference>
<dbReference type="GO" id="GO:0003677">
    <property type="term" value="F:DNA binding"/>
    <property type="evidence" value="ECO:0000266"/>
    <property type="project" value="RGD"/>
</dbReference>
<dbReference type="GO" id="GO:0043236">
    <property type="term" value="F:laminin binding"/>
    <property type="evidence" value="ECO:0000266"/>
    <property type="project" value="RGD"/>
</dbReference>
<dbReference type="GO" id="GO:0005055">
    <property type="term" value="F:laminin receptor activity"/>
    <property type="evidence" value="ECO:0000304"/>
    <property type="project" value="RGD"/>
</dbReference>
<dbReference type="GO" id="GO:0043022">
    <property type="term" value="F:ribosome binding"/>
    <property type="evidence" value="ECO:0000266"/>
    <property type="project" value="RGD"/>
</dbReference>
<dbReference type="GO" id="GO:0003735">
    <property type="term" value="F:structural constituent of ribosome"/>
    <property type="evidence" value="ECO:0000266"/>
    <property type="project" value="RGD"/>
</dbReference>
<dbReference type="GO" id="GO:0005198">
    <property type="term" value="F:structural molecule activity"/>
    <property type="evidence" value="ECO:0000305"/>
    <property type="project" value="RGD"/>
</dbReference>
<dbReference type="GO" id="GO:0140374">
    <property type="term" value="P:antiviral innate immune response"/>
    <property type="evidence" value="ECO:0000266"/>
    <property type="project" value="RGD"/>
</dbReference>
<dbReference type="GO" id="GO:0098609">
    <property type="term" value="P:cell-cell adhesion"/>
    <property type="evidence" value="ECO:0000314"/>
    <property type="project" value="RGD"/>
</dbReference>
<dbReference type="GO" id="GO:0002181">
    <property type="term" value="P:cytoplasmic translation"/>
    <property type="evidence" value="ECO:0000318"/>
    <property type="project" value="GO_Central"/>
</dbReference>
<dbReference type="GO" id="GO:0030855">
    <property type="term" value="P:epithelial cell differentiation"/>
    <property type="evidence" value="ECO:0000270"/>
    <property type="project" value="RGD"/>
</dbReference>
<dbReference type="GO" id="GO:0000028">
    <property type="term" value="P:ribosomal small subunit assembly"/>
    <property type="evidence" value="ECO:0000318"/>
    <property type="project" value="GO_Central"/>
</dbReference>
<dbReference type="CDD" id="cd01425">
    <property type="entry name" value="RPS2"/>
    <property type="match status" value="1"/>
</dbReference>
<dbReference type="FunFam" id="3.40.50.10490:FF:000012">
    <property type="entry name" value="40S ribosomal protein SA"/>
    <property type="match status" value="1"/>
</dbReference>
<dbReference type="Gene3D" id="3.40.50.10490">
    <property type="entry name" value="Glucose-6-phosphate isomerase like protein, domain 1"/>
    <property type="match status" value="1"/>
</dbReference>
<dbReference type="HAMAP" id="MF_03015">
    <property type="entry name" value="Ribosomal_S2_euk"/>
    <property type="match status" value="1"/>
</dbReference>
<dbReference type="HAMAP" id="MF_03016">
    <property type="entry name" value="Ribosomal_S2_laminin_receptor"/>
    <property type="match status" value="1"/>
</dbReference>
<dbReference type="InterPro" id="IPR001865">
    <property type="entry name" value="Ribosomal_uS2"/>
</dbReference>
<dbReference type="InterPro" id="IPR032281">
    <property type="entry name" value="Ribosomal_uS2_C"/>
</dbReference>
<dbReference type="InterPro" id="IPR018130">
    <property type="entry name" value="Ribosomal_uS2_CS"/>
</dbReference>
<dbReference type="InterPro" id="IPR027498">
    <property type="entry name" value="Ribosomal_uS2_euk"/>
</dbReference>
<dbReference type="InterPro" id="IPR005707">
    <property type="entry name" value="Ribosomal_uS2_euk/arc"/>
</dbReference>
<dbReference type="InterPro" id="IPR023591">
    <property type="entry name" value="Ribosomal_uS2_flav_dom_sf"/>
</dbReference>
<dbReference type="InterPro" id="IPR027504">
    <property type="entry name" value="Ribosomal_uS2_vert"/>
</dbReference>
<dbReference type="NCBIfam" id="TIGR01012">
    <property type="entry name" value="uS2_euk_arch"/>
    <property type="match status" value="1"/>
</dbReference>
<dbReference type="PANTHER" id="PTHR11489">
    <property type="entry name" value="40S RIBOSOMAL PROTEIN SA"/>
    <property type="match status" value="1"/>
</dbReference>
<dbReference type="Pfam" id="PF16122">
    <property type="entry name" value="40S_SA_C"/>
    <property type="match status" value="1"/>
</dbReference>
<dbReference type="Pfam" id="PF00318">
    <property type="entry name" value="Ribosomal_S2"/>
    <property type="match status" value="2"/>
</dbReference>
<dbReference type="PRINTS" id="PR00395">
    <property type="entry name" value="RIBOSOMALS2"/>
</dbReference>
<dbReference type="SUPFAM" id="SSF52313">
    <property type="entry name" value="Ribosomal protein S2"/>
    <property type="match status" value="1"/>
</dbReference>
<dbReference type="PROSITE" id="PS00962">
    <property type="entry name" value="RIBOSOMAL_S2_1"/>
    <property type="match status" value="1"/>
</dbReference>
<dbReference type="PROSITE" id="PS00963">
    <property type="entry name" value="RIBOSOMAL_S2_2"/>
    <property type="match status" value="1"/>
</dbReference>
<organism>
    <name type="scientific">Rattus norvegicus</name>
    <name type="common">Rat</name>
    <dbReference type="NCBI Taxonomy" id="10116"/>
    <lineage>
        <taxon>Eukaryota</taxon>
        <taxon>Metazoa</taxon>
        <taxon>Chordata</taxon>
        <taxon>Craniata</taxon>
        <taxon>Vertebrata</taxon>
        <taxon>Euteleostomi</taxon>
        <taxon>Mammalia</taxon>
        <taxon>Eutheria</taxon>
        <taxon>Euarchontoglires</taxon>
        <taxon>Glires</taxon>
        <taxon>Rodentia</taxon>
        <taxon>Myomorpha</taxon>
        <taxon>Muroidea</taxon>
        <taxon>Muridae</taxon>
        <taxon>Murinae</taxon>
        <taxon>Rattus</taxon>
    </lineage>
</organism>